<organism>
    <name type="scientific">Cyriopagopus schmidti</name>
    <name type="common">Chinese bird spider</name>
    <name type="synonym">Haplopelma schmidti</name>
    <dbReference type="NCBI Taxonomy" id="29017"/>
    <lineage>
        <taxon>Eukaryota</taxon>
        <taxon>Metazoa</taxon>
        <taxon>Ecdysozoa</taxon>
        <taxon>Arthropoda</taxon>
        <taxon>Chelicerata</taxon>
        <taxon>Arachnida</taxon>
        <taxon>Araneae</taxon>
        <taxon>Mygalomorphae</taxon>
        <taxon>Theraphosidae</taxon>
        <taxon>Cyriopagopus</taxon>
    </lineage>
</organism>
<dbReference type="EMBL" id="AY263709">
    <property type="protein sequence ID" value="AAP33076.1"/>
    <property type="molecule type" value="mRNA"/>
</dbReference>
<dbReference type="PDB" id="1I25">
    <property type="method" value="NMR"/>
    <property type="chains" value="A=49-85"/>
</dbReference>
<dbReference type="PDBsum" id="1I25"/>
<dbReference type="SMR" id="P82959"/>
<dbReference type="ArachnoServer" id="AS000328">
    <property type="toxin name" value="U1-theraphotoxin-Hs1a"/>
</dbReference>
<dbReference type="EvolutionaryTrace" id="P82959"/>
<dbReference type="GO" id="GO:0005576">
    <property type="term" value="C:extracellular region"/>
    <property type="evidence" value="ECO:0007669"/>
    <property type="project" value="UniProtKB-SubCell"/>
</dbReference>
<dbReference type="GO" id="GO:0035792">
    <property type="term" value="C:host cell postsynaptic membrane"/>
    <property type="evidence" value="ECO:0007669"/>
    <property type="project" value="UniProtKB-KW"/>
</dbReference>
<dbReference type="GO" id="GO:0090729">
    <property type="term" value="F:toxin activity"/>
    <property type="evidence" value="ECO:0007669"/>
    <property type="project" value="UniProtKB-KW"/>
</dbReference>
<dbReference type="InterPro" id="IPR012625">
    <property type="entry name" value="Hwtx-2-like"/>
</dbReference>
<dbReference type="Pfam" id="PF08089">
    <property type="entry name" value="Toxin_20"/>
    <property type="match status" value="1"/>
</dbReference>
<dbReference type="SUPFAM" id="SSF57059">
    <property type="entry name" value="omega toxin-like"/>
    <property type="match status" value="1"/>
</dbReference>
<dbReference type="PROSITE" id="PS60022">
    <property type="entry name" value="HWTX_2"/>
    <property type="match status" value="1"/>
</dbReference>
<proteinExistence type="evidence at protein level"/>
<name>TXH21_CYRSC</name>
<feature type="signal peptide" evidence="1">
    <location>
        <begin position="1"/>
        <end position="22"/>
    </location>
</feature>
<feature type="propeptide" id="PRO_0000035523" evidence="6">
    <location>
        <begin position="23"/>
        <end position="48"/>
    </location>
</feature>
<feature type="chain" id="PRO_0000035524" description="U1-theraphotoxin-Hs1a" evidence="2">
    <location>
        <begin position="49"/>
        <end position="85"/>
    </location>
</feature>
<feature type="disulfide bond" evidence="3 4 7">
    <location>
        <begin position="52"/>
        <end position="66"/>
    </location>
</feature>
<feature type="disulfide bond" evidence="3 4 7">
    <location>
        <begin position="56"/>
        <end position="77"/>
    </location>
</feature>
<feature type="disulfide bond" evidence="3 4 7">
    <location>
        <begin position="71"/>
        <end position="82"/>
    </location>
</feature>
<feature type="sequence variant" evidence="2">
    <original>I</original>
    <variation>Q</variation>
    <location>
        <position position="58"/>
    </location>
</feature>
<feature type="strand" evidence="8">
    <location>
        <begin position="56"/>
        <end position="60"/>
    </location>
</feature>
<feature type="strand" evidence="8">
    <location>
        <begin position="62"/>
        <end position="65"/>
    </location>
</feature>
<feature type="strand" evidence="8">
    <location>
        <begin position="75"/>
        <end position="77"/>
    </location>
</feature>
<feature type="strand" evidence="8">
    <location>
        <begin position="82"/>
        <end position="84"/>
    </location>
</feature>
<keyword id="KW-0002">3D-structure</keyword>
<keyword id="KW-0903">Direct protein sequencing</keyword>
<keyword id="KW-1015">Disulfide bond</keyword>
<keyword id="KW-0528">Neurotoxin</keyword>
<keyword id="KW-0629">Postsynaptic neurotoxin</keyword>
<keyword id="KW-0964">Secreted</keyword>
<keyword id="KW-0732">Signal</keyword>
<keyword id="KW-0800">Toxin</keyword>
<comment type="function">
    <text evidence="2">Lethal neurotoxin that blocks neuromuscular transmission. Acts cooperatively to potentiate the activity of huwentoxin-I. This toxin is active against insects.</text>
</comment>
<comment type="subunit">
    <text evidence="2">Heterodimer composed of the two variants Ile-58 and Gln-58.</text>
</comment>
<comment type="subcellular location">
    <subcellularLocation>
        <location evidence="2">Secreted</location>
    </subcellularLocation>
</comment>
<comment type="tissue specificity">
    <text evidence="6">Expressed by the venom gland.</text>
</comment>
<comment type="mass spectrometry" mass="4290.3" method="MALDI" evidence="2"/>
<comment type="similarity">
    <text evidence="5">Belongs to the neurotoxin 12 (Hwtx-2) family. 02 (Hwtx-2) subfamily.</text>
</comment>
<evidence type="ECO:0000255" key="1"/>
<evidence type="ECO:0000269" key="2">
    <source>
    </source>
</evidence>
<evidence type="ECO:0000269" key="3">
    <source>
    </source>
</evidence>
<evidence type="ECO:0000269" key="4">
    <source>
    </source>
</evidence>
<evidence type="ECO:0000305" key="5"/>
<evidence type="ECO:0000305" key="6">
    <source>
    </source>
</evidence>
<evidence type="ECO:0000312" key="7">
    <source>
        <dbReference type="PDB" id="1I25"/>
    </source>
</evidence>
<evidence type="ECO:0007829" key="8">
    <source>
        <dbReference type="PDB" id="1I25"/>
    </source>
</evidence>
<protein>
    <recommendedName>
        <fullName>U1-theraphotoxin-Hs1a</fullName>
        <shortName>U1-TRTX-Hs1a</shortName>
    </recommendedName>
    <alternativeName>
        <fullName>Huwentoxin-2 form 1</fullName>
    </alternativeName>
    <alternativeName>
        <fullName>Huwentoxin-II</fullName>
        <shortName>HwTx-II</shortName>
    </alternativeName>
</protein>
<sequence length="85" mass="9429">MKVTLIAILTCAAVLVLHTTAAEELEAESQLMEVGMPDTELAAVDEERLFECSFSCEIEKEGDKPCKKKKCKGGWKCKFNMCVKV</sequence>
<accession>P82959</accession>
<accession>Q86C50</accession>
<reference key="1">
    <citation type="journal article" date="2003" name="Toxicon">
        <title>cDNA sequence analysis of seven peptide toxins from the spider Selenocosmia huwena.</title>
        <authorList>
            <person name="Diao J."/>
            <person name="Lin Y."/>
            <person name="Tang J."/>
            <person name="Liang S.-P."/>
        </authorList>
    </citation>
    <scope>NUCLEOTIDE SEQUENCE [MRNA]</scope>
    <source>
        <tissue>Venom gland</tissue>
    </source>
</reference>
<reference key="2">
    <citation type="journal article" date="1999" name="J. Pept. Res.">
        <title>Purification and characterization of huwentoxin-II, a neurotoxic peptide from the venom of the Chinese bird spider Selenocosmia huwena.</title>
        <authorList>
            <person name="Shu Q."/>
            <person name="Liang S.-P."/>
        </authorList>
    </citation>
    <scope>PROTEIN SEQUENCE OF 49-85</scope>
    <scope>FUNCTION</scope>
    <scope>MASS SPECTROMETRY</scope>
    <scope>SUBCELLULAR LOCATION</scope>
    <source>
        <tissue>Venom</tissue>
    </source>
</reference>
<reference key="3">
    <citation type="journal article" date="2001" name="Eur. J. Biochem.">
        <title>Assignment of the disulfide bonds of huwentoxin-II by Edman degradation sequencing and stepwise thiol modification.</title>
        <authorList>
            <person name="Shu Q."/>
            <person name="Huang R."/>
            <person name="Liang S.-P."/>
        </authorList>
    </citation>
    <scope>DISULFIDE BONDS</scope>
</reference>
<reference key="4">
    <citation type="journal article" date="2002" name="Protein Sci.">
        <title>The structure of spider toxin huwentoxin-II with unique disulfide linkage: evidence for structural evolution.</title>
        <authorList>
            <person name="Shu Q."/>
            <person name="Lu S.Y."/>
            <person name="Gu X.-C."/>
            <person name="Liang S.-P."/>
        </authorList>
    </citation>
    <scope>STRUCTURE BY NMR OF 49-85</scope>
    <scope>DISULFIDE BONDS</scope>
</reference>